<organism>
    <name type="scientific">Escherichia coli (strain 55989 / EAEC)</name>
    <dbReference type="NCBI Taxonomy" id="585055"/>
    <lineage>
        <taxon>Bacteria</taxon>
        <taxon>Pseudomonadati</taxon>
        <taxon>Pseudomonadota</taxon>
        <taxon>Gammaproteobacteria</taxon>
        <taxon>Enterobacterales</taxon>
        <taxon>Enterobacteriaceae</taxon>
        <taxon>Escherichia</taxon>
    </lineage>
</organism>
<protein>
    <recommendedName>
        <fullName evidence="2">N(4)-acetylcytidine amidohydrolase</fullName>
        <shortName evidence="2">ac4C amidohydrolase</shortName>
        <ecNumber evidence="2">3.5.1.135</ecNumber>
    </recommendedName>
</protein>
<accession>B7LF85</accession>
<dbReference type="EC" id="3.5.1.135" evidence="2"/>
<dbReference type="EMBL" id="CU928145">
    <property type="protein sequence ID" value="CAU99151.1"/>
    <property type="molecule type" value="Genomic_DNA"/>
</dbReference>
<dbReference type="RefSeq" id="WP_001182954.1">
    <property type="nucleotide sequence ID" value="NC_011748.1"/>
</dbReference>
<dbReference type="SMR" id="B7LF85"/>
<dbReference type="GeneID" id="93779102"/>
<dbReference type="KEGG" id="eck:EC55989_3187"/>
<dbReference type="HOGENOM" id="CLU_152586_0_0_6"/>
<dbReference type="Proteomes" id="UP000000746">
    <property type="component" value="Chromosome"/>
</dbReference>
<dbReference type="GO" id="GO:0005829">
    <property type="term" value="C:cytosol"/>
    <property type="evidence" value="ECO:0007669"/>
    <property type="project" value="TreeGrafter"/>
</dbReference>
<dbReference type="GO" id="GO:0016813">
    <property type="term" value="F:hydrolase activity, acting on carbon-nitrogen (but not peptide) bonds, in linear amidines"/>
    <property type="evidence" value="ECO:0007669"/>
    <property type="project" value="UniProtKB-UniRule"/>
</dbReference>
<dbReference type="GO" id="GO:0106251">
    <property type="term" value="F:N4-acetylcytidine amidohydrolase activity"/>
    <property type="evidence" value="ECO:0007669"/>
    <property type="project" value="RHEA"/>
</dbReference>
<dbReference type="CDD" id="cd06552">
    <property type="entry name" value="ASCH_yqfb_like"/>
    <property type="match status" value="1"/>
</dbReference>
<dbReference type="FunFam" id="2.30.130.30:FF:000001">
    <property type="entry name" value="UPF0267 protein YqfB"/>
    <property type="match status" value="1"/>
</dbReference>
<dbReference type="Gene3D" id="2.30.130.30">
    <property type="entry name" value="Hypothetical protein"/>
    <property type="match status" value="1"/>
</dbReference>
<dbReference type="HAMAP" id="MF_00684">
    <property type="entry name" value="ac4C_amidohydr"/>
    <property type="match status" value="1"/>
</dbReference>
<dbReference type="InterPro" id="IPR008314">
    <property type="entry name" value="AC4CH"/>
</dbReference>
<dbReference type="InterPro" id="IPR007374">
    <property type="entry name" value="ASCH_domain"/>
</dbReference>
<dbReference type="InterPro" id="IPR015947">
    <property type="entry name" value="PUA-like_sf"/>
</dbReference>
<dbReference type="NCBIfam" id="NF003443">
    <property type="entry name" value="PRK04980.1"/>
    <property type="match status" value="1"/>
</dbReference>
<dbReference type="PANTHER" id="PTHR38088">
    <property type="entry name" value="UCP029143 FAMILY PROTEIN"/>
    <property type="match status" value="1"/>
</dbReference>
<dbReference type="PANTHER" id="PTHR38088:SF2">
    <property type="entry name" value="UCP029143 FAMILY PROTEIN"/>
    <property type="match status" value="1"/>
</dbReference>
<dbReference type="Pfam" id="PF04266">
    <property type="entry name" value="ASCH"/>
    <property type="match status" value="1"/>
</dbReference>
<dbReference type="PIRSF" id="PIRSF029143">
    <property type="entry name" value="UCP029143"/>
    <property type="match status" value="1"/>
</dbReference>
<dbReference type="SMART" id="SM01022">
    <property type="entry name" value="ASCH"/>
    <property type="match status" value="1"/>
</dbReference>
<dbReference type="SUPFAM" id="SSF88697">
    <property type="entry name" value="PUA domain-like"/>
    <property type="match status" value="1"/>
</dbReference>
<gene>
    <name type="primary">yqfB</name>
    <name type="ordered locus">EC55989_3187</name>
</gene>
<proteinExistence type="inferred from homology"/>
<name>AC4CH_ECO55</name>
<comment type="function">
    <text evidence="2">Catalyzes the hydrolysis of N(4)-acetylcytidine (ac4C).</text>
</comment>
<comment type="catalytic activity">
    <reaction evidence="2">
        <text>N(4)-acetylcytidine + H2O = cytidine + acetate + H(+)</text>
        <dbReference type="Rhea" id="RHEA:62932"/>
        <dbReference type="ChEBI" id="CHEBI:15377"/>
        <dbReference type="ChEBI" id="CHEBI:15378"/>
        <dbReference type="ChEBI" id="CHEBI:17562"/>
        <dbReference type="ChEBI" id="CHEBI:30089"/>
        <dbReference type="ChEBI" id="CHEBI:70989"/>
        <dbReference type="EC" id="3.5.1.135"/>
    </reaction>
</comment>
<comment type="catalytic activity">
    <reaction evidence="2">
        <text>N(4)-acetyl-2'-deoxycytidine + H2O = 2'-deoxycytidine + acetate + H(+)</text>
        <dbReference type="Rhea" id="RHEA:62936"/>
        <dbReference type="ChEBI" id="CHEBI:15377"/>
        <dbReference type="ChEBI" id="CHEBI:15378"/>
        <dbReference type="ChEBI" id="CHEBI:15698"/>
        <dbReference type="ChEBI" id="CHEBI:30089"/>
        <dbReference type="ChEBI" id="CHEBI:146133"/>
        <dbReference type="EC" id="3.5.1.135"/>
    </reaction>
</comment>
<comment type="catalytic activity">
    <reaction evidence="2">
        <text>N(4)-acetylcytosine + H2O = cytosine + acetate + H(+)</text>
        <dbReference type="Rhea" id="RHEA:62940"/>
        <dbReference type="ChEBI" id="CHEBI:15377"/>
        <dbReference type="ChEBI" id="CHEBI:15378"/>
        <dbReference type="ChEBI" id="CHEBI:16040"/>
        <dbReference type="ChEBI" id="CHEBI:30089"/>
        <dbReference type="ChEBI" id="CHEBI:146134"/>
        <dbReference type="EC" id="3.5.1.135"/>
    </reaction>
</comment>
<comment type="similarity">
    <text evidence="2">Belongs to the N(4)-acetylcytidine amidohydrolase family.</text>
</comment>
<keyword id="KW-0378">Hydrolase</keyword>
<keyword id="KW-1185">Reference proteome</keyword>
<evidence type="ECO:0000255" key="1"/>
<evidence type="ECO:0000255" key="2">
    <source>
        <dbReference type="HAMAP-Rule" id="MF_00684"/>
    </source>
</evidence>
<sequence length="103" mass="11890">MQPNDITFFQRFQDDILAGRKTITIRDESESHFKTGDVLRVGRFEDDGYFCTIEVTATSTVTLDTLTEKHAEQENMTLTELIKVIADIYPGQTQFYVIEFKCL</sequence>
<feature type="chain" id="PRO_1000147749" description="N(4)-acetylcytidine amidohydrolase">
    <location>
        <begin position="1"/>
        <end position="103"/>
    </location>
</feature>
<feature type="domain" description="ASCH" evidence="1">
    <location>
        <begin position="6"/>
        <end position="101"/>
    </location>
</feature>
<feature type="active site" description="Proton acceptor" evidence="2">
    <location>
        <position position="21"/>
    </location>
</feature>
<feature type="active site" description="Nucleophile" evidence="2">
    <location>
        <position position="24"/>
    </location>
</feature>
<feature type="active site" description="Proton donor" evidence="2">
    <location>
        <position position="74"/>
    </location>
</feature>
<reference key="1">
    <citation type="journal article" date="2009" name="PLoS Genet.">
        <title>Organised genome dynamics in the Escherichia coli species results in highly diverse adaptive paths.</title>
        <authorList>
            <person name="Touchon M."/>
            <person name="Hoede C."/>
            <person name="Tenaillon O."/>
            <person name="Barbe V."/>
            <person name="Baeriswyl S."/>
            <person name="Bidet P."/>
            <person name="Bingen E."/>
            <person name="Bonacorsi S."/>
            <person name="Bouchier C."/>
            <person name="Bouvet O."/>
            <person name="Calteau A."/>
            <person name="Chiapello H."/>
            <person name="Clermont O."/>
            <person name="Cruveiller S."/>
            <person name="Danchin A."/>
            <person name="Diard M."/>
            <person name="Dossat C."/>
            <person name="Karoui M.E."/>
            <person name="Frapy E."/>
            <person name="Garry L."/>
            <person name="Ghigo J.M."/>
            <person name="Gilles A.M."/>
            <person name="Johnson J."/>
            <person name="Le Bouguenec C."/>
            <person name="Lescat M."/>
            <person name="Mangenot S."/>
            <person name="Martinez-Jehanne V."/>
            <person name="Matic I."/>
            <person name="Nassif X."/>
            <person name="Oztas S."/>
            <person name="Petit M.A."/>
            <person name="Pichon C."/>
            <person name="Rouy Z."/>
            <person name="Ruf C.S."/>
            <person name="Schneider D."/>
            <person name="Tourret J."/>
            <person name="Vacherie B."/>
            <person name="Vallenet D."/>
            <person name="Medigue C."/>
            <person name="Rocha E.P.C."/>
            <person name="Denamur E."/>
        </authorList>
    </citation>
    <scope>NUCLEOTIDE SEQUENCE [LARGE SCALE GENOMIC DNA]</scope>
    <source>
        <strain>55989 / EAEC</strain>
    </source>
</reference>